<name>RL11_SALA4</name>
<gene>
    <name evidence="1" type="primary">rplK</name>
    <name type="ordered locus">SeAg_B4391</name>
</gene>
<proteinExistence type="inferred from homology"/>
<comment type="function">
    <text evidence="1">Forms part of the ribosomal stalk which helps the ribosome interact with GTP-bound translation factors.</text>
</comment>
<comment type="subunit">
    <text evidence="1">Part of the ribosomal stalk of the 50S ribosomal subunit. Interacts with L10 and the large rRNA to form the base of the stalk. L10 forms an elongated spine to which L12 dimers bind in a sequential fashion forming a multimeric L10(L12)X complex.</text>
</comment>
<comment type="PTM">
    <text evidence="1">One or more lysine residues are methylated.</text>
</comment>
<comment type="similarity">
    <text evidence="1">Belongs to the universal ribosomal protein uL11 family.</text>
</comment>
<accession>B5F0W3</accession>
<organism>
    <name type="scientific">Salmonella agona (strain SL483)</name>
    <dbReference type="NCBI Taxonomy" id="454166"/>
    <lineage>
        <taxon>Bacteria</taxon>
        <taxon>Pseudomonadati</taxon>
        <taxon>Pseudomonadota</taxon>
        <taxon>Gammaproteobacteria</taxon>
        <taxon>Enterobacterales</taxon>
        <taxon>Enterobacteriaceae</taxon>
        <taxon>Salmonella</taxon>
    </lineage>
</organism>
<evidence type="ECO:0000255" key="1">
    <source>
        <dbReference type="HAMAP-Rule" id="MF_00736"/>
    </source>
</evidence>
<evidence type="ECO:0000305" key="2"/>
<protein>
    <recommendedName>
        <fullName evidence="1">Large ribosomal subunit protein uL11</fullName>
    </recommendedName>
    <alternativeName>
        <fullName evidence="2">50S ribosomal protein L11</fullName>
    </alternativeName>
</protein>
<sequence length="142" mass="14875">MAKKVQAYVKLQVAAGMANPSPPVGPALGQQGVNIMEFCKAFNAKTDSIEKGLPIPVVITVYADRSFTFVTKTPPAAVLLKKAAGIKSGSGKPNKDKVGKISRAQLQEIAQTKAADMTGADIEAMTRSIEGTARSMGLVVED</sequence>
<feature type="chain" id="PRO_1000195704" description="Large ribosomal subunit protein uL11">
    <location>
        <begin position="1"/>
        <end position="142"/>
    </location>
</feature>
<reference key="1">
    <citation type="journal article" date="2011" name="J. Bacteriol.">
        <title>Comparative genomics of 28 Salmonella enterica isolates: evidence for CRISPR-mediated adaptive sublineage evolution.</title>
        <authorList>
            <person name="Fricke W.F."/>
            <person name="Mammel M.K."/>
            <person name="McDermott P.F."/>
            <person name="Tartera C."/>
            <person name="White D.G."/>
            <person name="Leclerc J.E."/>
            <person name="Ravel J."/>
            <person name="Cebula T.A."/>
        </authorList>
    </citation>
    <scope>NUCLEOTIDE SEQUENCE [LARGE SCALE GENOMIC DNA]</scope>
    <source>
        <strain>SL483</strain>
    </source>
</reference>
<dbReference type="EMBL" id="CP001138">
    <property type="protein sequence ID" value="ACH48505.1"/>
    <property type="molecule type" value="Genomic_DNA"/>
</dbReference>
<dbReference type="RefSeq" id="WP_001085926.1">
    <property type="nucleotide sequence ID" value="NC_011149.1"/>
</dbReference>
<dbReference type="SMR" id="B5F0W3"/>
<dbReference type="GeneID" id="93777911"/>
<dbReference type="KEGG" id="sea:SeAg_B4391"/>
<dbReference type="HOGENOM" id="CLU_074237_2_0_6"/>
<dbReference type="Proteomes" id="UP000008819">
    <property type="component" value="Chromosome"/>
</dbReference>
<dbReference type="GO" id="GO:0022625">
    <property type="term" value="C:cytosolic large ribosomal subunit"/>
    <property type="evidence" value="ECO:0007669"/>
    <property type="project" value="TreeGrafter"/>
</dbReference>
<dbReference type="GO" id="GO:0070180">
    <property type="term" value="F:large ribosomal subunit rRNA binding"/>
    <property type="evidence" value="ECO:0007669"/>
    <property type="project" value="UniProtKB-UniRule"/>
</dbReference>
<dbReference type="GO" id="GO:0003735">
    <property type="term" value="F:structural constituent of ribosome"/>
    <property type="evidence" value="ECO:0007669"/>
    <property type="project" value="InterPro"/>
</dbReference>
<dbReference type="GO" id="GO:0006412">
    <property type="term" value="P:translation"/>
    <property type="evidence" value="ECO:0007669"/>
    <property type="project" value="UniProtKB-UniRule"/>
</dbReference>
<dbReference type="CDD" id="cd00349">
    <property type="entry name" value="Ribosomal_L11"/>
    <property type="match status" value="1"/>
</dbReference>
<dbReference type="FunFam" id="1.10.10.250:FF:000001">
    <property type="entry name" value="50S ribosomal protein L11"/>
    <property type="match status" value="1"/>
</dbReference>
<dbReference type="FunFam" id="3.30.1550.10:FF:000001">
    <property type="entry name" value="50S ribosomal protein L11"/>
    <property type="match status" value="1"/>
</dbReference>
<dbReference type="Gene3D" id="1.10.10.250">
    <property type="entry name" value="Ribosomal protein L11, C-terminal domain"/>
    <property type="match status" value="1"/>
</dbReference>
<dbReference type="Gene3D" id="3.30.1550.10">
    <property type="entry name" value="Ribosomal protein L11/L12, N-terminal domain"/>
    <property type="match status" value="1"/>
</dbReference>
<dbReference type="HAMAP" id="MF_00736">
    <property type="entry name" value="Ribosomal_uL11"/>
    <property type="match status" value="1"/>
</dbReference>
<dbReference type="InterPro" id="IPR000911">
    <property type="entry name" value="Ribosomal_uL11"/>
</dbReference>
<dbReference type="InterPro" id="IPR006519">
    <property type="entry name" value="Ribosomal_uL11_bac-typ"/>
</dbReference>
<dbReference type="InterPro" id="IPR020783">
    <property type="entry name" value="Ribosomal_uL11_C"/>
</dbReference>
<dbReference type="InterPro" id="IPR036769">
    <property type="entry name" value="Ribosomal_uL11_C_sf"/>
</dbReference>
<dbReference type="InterPro" id="IPR020785">
    <property type="entry name" value="Ribosomal_uL11_CS"/>
</dbReference>
<dbReference type="InterPro" id="IPR020784">
    <property type="entry name" value="Ribosomal_uL11_N"/>
</dbReference>
<dbReference type="InterPro" id="IPR036796">
    <property type="entry name" value="Ribosomal_uL11_N_sf"/>
</dbReference>
<dbReference type="NCBIfam" id="TIGR01632">
    <property type="entry name" value="L11_bact"/>
    <property type="match status" value="1"/>
</dbReference>
<dbReference type="PANTHER" id="PTHR11661">
    <property type="entry name" value="60S RIBOSOMAL PROTEIN L12"/>
    <property type="match status" value="1"/>
</dbReference>
<dbReference type="PANTHER" id="PTHR11661:SF1">
    <property type="entry name" value="LARGE RIBOSOMAL SUBUNIT PROTEIN UL11M"/>
    <property type="match status" value="1"/>
</dbReference>
<dbReference type="Pfam" id="PF00298">
    <property type="entry name" value="Ribosomal_L11"/>
    <property type="match status" value="1"/>
</dbReference>
<dbReference type="Pfam" id="PF03946">
    <property type="entry name" value="Ribosomal_L11_N"/>
    <property type="match status" value="1"/>
</dbReference>
<dbReference type="SMART" id="SM00649">
    <property type="entry name" value="RL11"/>
    <property type="match status" value="1"/>
</dbReference>
<dbReference type="SUPFAM" id="SSF54747">
    <property type="entry name" value="Ribosomal L11/L12e N-terminal domain"/>
    <property type="match status" value="1"/>
</dbReference>
<dbReference type="SUPFAM" id="SSF46906">
    <property type="entry name" value="Ribosomal protein L11, C-terminal domain"/>
    <property type="match status" value="1"/>
</dbReference>
<dbReference type="PROSITE" id="PS00359">
    <property type="entry name" value="RIBOSOMAL_L11"/>
    <property type="match status" value="1"/>
</dbReference>
<keyword id="KW-0488">Methylation</keyword>
<keyword id="KW-0687">Ribonucleoprotein</keyword>
<keyword id="KW-0689">Ribosomal protein</keyword>
<keyword id="KW-0694">RNA-binding</keyword>
<keyword id="KW-0699">rRNA-binding</keyword>